<organism>
    <name type="scientific">Janthinobacterium sp. (strain Marseille)</name>
    <name type="common">Minibacterium massiliensis</name>
    <dbReference type="NCBI Taxonomy" id="375286"/>
    <lineage>
        <taxon>Bacteria</taxon>
        <taxon>Pseudomonadati</taxon>
        <taxon>Pseudomonadota</taxon>
        <taxon>Betaproteobacteria</taxon>
        <taxon>Burkholderiales</taxon>
        <taxon>Oxalobacteraceae</taxon>
        <taxon>Janthinobacterium</taxon>
    </lineage>
</organism>
<name>HIS4_JANMA</name>
<keyword id="KW-0028">Amino-acid biosynthesis</keyword>
<keyword id="KW-0963">Cytoplasm</keyword>
<keyword id="KW-0368">Histidine biosynthesis</keyword>
<keyword id="KW-0413">Isomerase</keyword>
<accession>A6T377</accession>
<feature type="chain" id="PRO_1000063213" description="1-(5-phosphoribosyl)-5-[(5-phosphoribosylamino)methylideneamino] imidazole-4-carboxamide isomerase">
    <location>
        <begin position="1"/>
        <end position="261"/>
    </location>
</feature>
<feature type="active site" description="Proton acceptor" evidence="1">
    <location>
        <position position="8"/>
    </location>
</feature>
<feature type="active site" description="Proton donor" evidence="1">
    <location>
        <position position="139"/>
    </location>
</feature>
<proteinExistence type="inferred from homology"/>
<dbReference type="EC" id="5.3.1.16" evidence="1"/>
<dbReference type="EMBL" id="CP000269">
    <property type="protein sequence ID" value="ABR88780.1"/>
    <property type="molecule type" value="Genomic_DNA"/>
</dbReference>
<dbReference type="RefSeq" id="WP_012081127.1">
    <property type="nucleotide sequence ID" value="NC_009659.1"/>
</dbReference>
<dbReference type="SMR" id="A6T377"/>
<dbReference type="STRING" id="375286.mma_3284"/>
<dbReference type="KEGG" id="mms:mma_3284"/>
<dbReference type="eggNOG" id="COG0106">
    <property type="taxonomic scope" value="Bacteria"/>
</dbReference>
<dbReference type="HOGENOM" id="CLU_048577_1_1_4"/>
<dbReference type="OrthoDB" id="9807749at2"/>
<dbReference type="UniPathway" id="UPA00031">
    <property type="reaction ID" value="UER00009"/>
</dbReference>
<dbReference type="Proteomes" id="UP000006388">
    <property type="component" value="Chromosome"/>
</dbReference>
<dbReference type="GO" id="GO:0005737">
    <property type="term" value="C:cytoplasm"/>
    <property type="evidence" value="ECO:0007669"/>
    <property type="project" value="UniProtKB-SubCell"/>
</dbReference>
<dbReference type="GO" id="GO:0003949">
    <property type="term" value="F:1-(5-phosphoribosyl)-5-[(5-phosphoribosylamino)methylideneamino]imidazole-4-carboxamide isomerase activity"/>
    <property type="evidence" value="ECO:0007669"/>
    <property type="project" value="UniProtKB-UniRule"/>
</dbReference>
<dbReference type="GO" id="GO:0000105">
    <property type="term" value="P:L-histidine biosynthetic process"/>
    <property type="evidence" value="ECO:0007669"/>
    <property type="project" value="UniProtKB-UniRule"/>
</dbReference>
<dbReference type="GO" id="GO:0000162">
    <property type="term" value="P:L-tryptophan biosynthetic process"/>
    <property type="evidence" value="ECO:0007669"/>
    <property type="project" value="TreeGrafter"/>
</dbReference>
<dbReference type="CDD" id="cd04732">
    <property type="entry name" value="HisA"/>
    <property type="match status" value="1"/>
</dbReference>
<dbReference type="FunFam" id="3.20.20.70:FF:000009">
    <property type="entry name" value="1-(5-phosphoribosyl)-5-[(5-phosphoribosylamino)methylideneamino] imidazole-4-carboxamide isomerase"/>
    <property type="match status" value="1"/>
</dbReference>
<dbReference type="Gene3D" id="3.20.20.70">
    <property type="entry name" value="Aldolase class I"/>
    <property type="match status" value="1"/>
</dbReference>
<dbReference type="HAMAP" id="MF_01014">
    <property type="entry name" value="HisA"/>
    <property type="match status" value="1"/>
</dbReference>
<dbReference type="InterPro" id="IPR013785">
    <property type="entry name" value="Aldolase_TIM"/>
</dbReference>
<dbReference type="InterPro" id="IPR006062">
    <property type="entry name" value="His_biosynth"/>
</dbReference>
<dbReference type="InterPro" id="IPR006063">
    <property type="entry name" value="HisA_bact_arch"/>
</dbReference>
<dbReference type="InterPro" id="IPR044524">
    <property type="entry name" value="Isoase_HisA-like"/>
</dbReference>
<dbReference type="InterPro" id="IPR023016">
    <property type="entry name" value="Isoase_HisA-like_bact"/>
</dbReference>
<dbReference type="InterPro" id="IPR011060">
    <property type="entry name" value="RibuloseP-bd_barrel"/>
</dbReference>
<dbReference type="NCBIfam" id="TIGR00007">
    <property type="entry name" value="1-(5-phosphoribosyl)-5-[(5-phosphoribosylamino)methylideneamino]imidazole-4-carboxamide isomerase"/>
    <property type="match status" value="1"/>
</dbReference>
<dbReference type="PANTHER" id="PTHR43090">
    <property type="entry name" value="1-(5-PHOSPHORIBOSYL)-5-[(5-PHOSPHORIBOSYLAMINO)METHYLIDENEAMINO] IMIDAZOLE-4-CARBOXAMIDE ISOMERASE"/>
    <property type="match status" value="1"/>
</dbReference>
<dbReference type="PANTHER" id="PTHR43090:SF2">
    <property type="entry name" value="1-(5-PHOSPHORIBOSYL)-5-[(5-PHOSPHORIBOSYLAMINO)METHYLIDENEAMINO] IMIDAZOLE-4-CARBOXAMIDE ISOMERASE"/>
    <property type="match status" value="1"/>
</dbReference>
<dbReference type="Pfam" id="PF00977">
    <property type="entry name" value="His_biosynth"/>
    <property type="match status" value="1"/>
</dbReference>
<dbReference type="SUPFAM" id="SSF51366">
    <property type="entry name" value="Ribulose-phoshate binding barrel"/>
    <property type="match status" value="1"/>
</dbReference>
<evidence type="ECO:0000255" key="1">
    <source>
        <dbReference type="HAMAP-Rule" id="MF_01014"/>
    </source>
</evidence>
<comment type="catalytic activity">
    <reaction evidence="1">
        <text>1-(5-phospho-beta-D-ribosyl)-5-[(5-phospho-beta-D-ribosylamino)methylideneamino]imidazole-4-carboxamide = 5-[(5-phospho-1-deoxy-D-ribulos-1-ylimino)methylamino]-1-(5-phospho-beta-D-ribosyl)imidazole-4-carboxamide</text>
        <dbReference type="Rhea" id="RHEA:15469"/>
        <dbReference type="ChEBI" id="CHEBI:58435"/>
        <dbReference type="ChEBI" id="CHEBI:58525"/>
        <dbReference type="EC" id="5.3.1.16"/>
    </reaction>
</comment>
<comment type="pathway">
    <text evidence="1">Amino-acid biosynthesis; L-histidine biosynthesis; L-histidine from 5-phospho-alpha-D-ribose 1-diphosphate: step 4/9.</text>
</comment>
<comment type="subcellular location">
    <subcellularLocation>
        <location evidence="1">Cytoplasm</location>
    </subcellularLocation>
</comment>
<comment type="similarity">
    <text evidence="1">Belongs to the HisA/HisF family.</text>
</comment>
<gene>
    <name evidence="1" type="primary">hisA</name>
    <name type="ordered locus">mma_3284</name>
</gene>
<sequence>MLLIPAIDLKDGHCVRLKQGDMDQATVFSEDPAEMARHWLLQGARRLHLVDLNGAFAGKPKNESAVKSILQAVREYAEKNGIEEIPVQLGGGIRDLDTIERYLDDGLSYIIIGTAAVKNPGFLHDACSAFPGQIIVGLDAKDGKVATDGWSKLSGHEVIDLAKKFEDYGCESIIYTDIGRDGMMGGVNIEATVKLAQSMTIPVIASGGVHNIKDVEALCAVQDEGIEGVICGRSIYEGTLDLRSAQDRADELTDEAPEADA</sequence>
<reference key="1">
    <citation type="journal article" date="2007" name="PLoS Genet.">
        <title>Genome analysis of Minibacterium massiliensis highlights the convergent evolution of water-living bacteria.</title>
        <authorList>
            <person name="Audic S."/>
            <person name="Robert C."/>
            <person name="Campagna B."/>
            <person name="Parinello H."/>
            <person name="Claverie J.-M."/>
            <person name="Raoult D."/>
            <person name="Drancourt M."/>
        </authorList>
    </citation>
    <scope>NUCLEOTIDE SEQUENCE [LARGE SCALE GENOMIC DNA]</scope>
    <source>
        <strain>Marseille</strain>
    </source>
</reference>
<protein>
    <recommendedName>
        <fullName evidence="1">1-(5-phosphoribosyl)-5-[(5-phosphoribosylamino)methylideneamino] imidazole-4-carboxamide isomerase</fullName>
        <ecNumber evidence="1">5.3.1.16</ecNumber>
    </recommendedName>
    <alternativeName>
        <fullName evidence="1">Phosphoribosylformimino-5-aminoimidazole carboxamide ribotide isomerase</fullName>
    </alternativeName>
</protein>